<evidence type="ECO:0000250" key="1">
    <source>
        <dbReference type="UniProtKB" id="P09631"/>
    </source>
</evidence>
<evidence type="ECO:0000250" key="2">
    <source>
        <dbReference type="UniProtKB" id="P31269"/>
    </source>
</evidence>
<evidence type="ECO:0000255" key="3">
    <source>
        <dbReference type="PROSITE-ProRule" id="PRU00108"/>
    </source>
</evidence>
<evidence type="ECO:0000256" key="4">
    <source>
        <dbReference type="SAM" id="MobiDB-lite"/>
    </source>
</evidence>
<evidence type="ECO:0000305" key="5"/>
<feature type="chain" id="PRO_0000200080" description="Homeobox protein Hox-A9">
    <location>
        <begin position="1" status="less than"/>
        <end position="162"/>
    </location>
</feature>
<feature type="DNA-binding region" description="Homeobox" evidence="3">
    <location>
        <begin position="96"/>
        <end position="155"/>
    </location>
</feature>
<feature type="region of interest" description="Disordered" evidence="4">
    <location>
        <begin position="56"/>
        <end position="91"/>
    </location>
</feature>
<feature type="non-terminal residue">
    <location>
        <position position="1"/>
    </location>
</feature>
<reference key="1">
    <citation type="journal article" date="1990" name="DNA Seq.">
        <title>Alternatively spliced Hox-1.7 transcripts encode different protein products.</title>
        <authorList>
            <person name="Rubin M.R."/>
            <person name="Nguyen-Huu M.C."/>
        </authorList>
    </citation>
    <scope>NUCLEOTIDE SEQUENCE [MRNA]</scope>
    <source>
        <tissue>Kidney</tissue>
    </source>
</reference>
<accession>P51783</accession>
<sequence length="162" mass="18661">NSGTVLLLVSEGGSSRSRSSWCCNLKQLAFAGLAGDPAWRSQLPLGSDSEMCQVDREKQPNEGAFSENNAENDSSGDKPPIDPNNPAANWLHARSTRKKRCPYTKHQTLELEKEFLFNMYLTRDRRYEVARLLNLTERQVKIWFQNRRMKMKKINKDRAKDE</sequence>
<protein>
    <recommendedName>
        <fullName>Homeobox protein Hox-A9</fullName>
    </recommendedName>
    <alternativeName>
        <fullName>Homeobox protein Hox-1.7</fullName>
    </alternativeName>
</protein>
<organism>
    <name type="scientific">Cavia porcellus</name>
    <name type="common">Guinea pig</name>
    <dbReference type="NCBI Taxonomy" id="10141"/>
    <lineage>
        <taxon>Eukaryota</taxon>
        <taxon>Metazoa</taxon>
        <taxon>Chordata</taxon>
        <taxon>Craniata</taxon>
        <taxon>Vertebrata</taxon>
        <taxon>Euteleostomi</taxon>
        <taxon>Mammalia</taxon>
        <taxon>Eutheria</taxon>
        <taxon>Euarchontoglires</taxon>
        <taxon>Glires</taxon>
        <taxon>Rodentia</taxon>
        <taxon>Hystricomorpha</taxon>
        <taxon>Caviidae</taxon>
        <taxon>Cavia</taxon>
    </lineage>
</organism>
<comment type="function">
    <text evidence="1 2">Sequence-specific transcription factor which is part of a developmental regulatory system that provides cells with specific positional identities on the anterior-posterior axis. Required for induction of SELE/E-selectin and VCAM1 on the endothelial cell surface at sites of inflammation (By similarity). Positively regulates EIF4E-mediated mRNA nuclear export and also increases the translation efficiency of ODC mRNA in the cytoplasm by competing with factors which repress EIF4E activity such as PRH (By similarity).</text>
</comment>
<comment type="subunit">
    <text evidence="1 2">Transiently interacts with PRMT5 in TNF-alpha stimulated endothelial cells (By similarity). Interacts with EIF4E (By similarity).</text>
</comment>
<comment type="subcellular location">
    <subcellularLocation>
        <location evidence="2">Nucleus</location>
    </subcellularLocation>
    <subcellularLocation>
        <location evidence="2">Cytoplasm</location>
    </subcellularLocation>
</comment>
<comment type="similarity">
    <text evidence="5">Belongs to the Abd-B homeobox family.</text>
</comment>
<gene>
    <name type="primary">HOXA9</name>
    <name type="synonym">HOX-1.7</name>
</gene>
<keyword id="KW-0963">Cytoplasm</keyword>
<keyword id="KW-0217">Developmental protein</keyword>
<keyword id="KW-0238">DNA-binding</keyword>
<keyword id="KW-0371">Homeobox</keyword>
<keyword id="KW-0539">Nucleus</keyword>
<keyword id="KW-1185">Reference proteome</keyword>
<keyword id="KW-0804">Transcription</keyword>
<keyword id="KW-0805">Transcription regulation</keyword>
<proteinExistence type="evidence at transcript level"/>
<name>HXA9_CAVPO</name>
<dbReference type="EMBL" id="X13536">
    <property type="protein sequence ID" value="CAA31887.1"/>
    <property type="molecule type" value="mRNA"/>
</dbReference>
<dbReference type="PIR" id="A48428">
    <property type="entry name" value="A48428"/>
</dbReference>
<dbReference type="SMR" id="P51783"/>
<dbReference type="STRING" id="10141.ENSCPOP00000010215"/>
<dbReference type="eggNOG" id="KOG0487">
    <property type="taxonomic scope" value="Eukaryota"/>
</dbReference>
<dbReference type="InParanoid" id="P51783"/>
<dbReference type="Proteomes" id="UP000005447">
    <property type="component" value="Unassembled WGS sequence"/>
</dbReference>
<dbReference type="GO" id="GO:0005737">
    <property type="term" value="C:cytoplasm"/>
    <property type="evidence" value="ECO:0007669"/>
    <property type="project" value="UniProtKB-SubCell"/>
</dbReference>
<dbReference type="GO" id="GO:0005634">
    <property type="term" value="C:nucleus"/>
    <property type="evidence" value="ECO:0007669"/>
    <property type="project" value="UniProtKB-SubCell"/>
</dbReference>
<dbReference type="GO" id="GO:0000981">
    <property type="term" value="F:DNA-binding transcription factor activity, RNA polymerase II-specific"/>
    <property type="evidence" value="ECO:0007669"/>
    <property type="project" value="InterPro"/>
</dbReference>
<dbReference type="GO" id="GO:0000978">
    <property type="term" value="F:RNA polymerase II cis-regulatory region sequence-specific DNA binding"/>
    <property type="evidence" value="ECO:0007669"/>
    <property type="project" value="TreeGrafter"/>
</dbReference>
<dbReference type="GO" id="GO:0009952">
    <property type="term" value="P:anterior/posterior pattern specification"/>
    <property type="evidence" value="ECO:0007669"/>
    <property type="project" value="TreeGrafter"/>
</dbReference>
<dbReference type="GO" id="GO:0048704">
    <property type="term" value="P:embryonic skeletal system morphogenesis"/>
    <property type="evidence" value="ECO:0007669"/>
    <property type="project" value="TreeGrafter"/>
</dbReference>
<dbReference type="GO" id="GO:0045638">
    <property type="term" value="P:negative regulation of myeloid cell differentiation"/>
    <property type="evidence" value="ECO:0000250"/>
    <property type="project" value="UniProtKB"/>
</dbReference>
<dbReference type="GO" id="GO:0009954">
    <property type="term" value="P:proximal/distal pattern formation"/>
    <property type="evidence" value="ECO:0007669"/>
    <property type="project" value="TreeGrafter"/>
</dbReference>
<dbReference type="CDD" id="cd00086">
    <property type="entry name" value="homeodomain"/>
    <property type="match status" value="1"/>
</dbReference>
<dbReference type="FunFam" id="1.10.10.60:FF:000018">
    <property type="entry name" value="Homeobox A10"/>
    <property type="match status" value="1"/>
</dbReference>
<dbReference type="Gene3D" id="1.10.10.60">
    <property type="entry name" value="Homeodomain-like"/>
    <property type="match status" value="1"/>
</dbReference>
<dbReference type="InterPro" id="IPR050803">
    <property type="entry name" value="Abd-B_homeobox_TF"/>
</dbReference>
<dbReference type="InterPro" id="IPR001356">
    <property type="entry name" value="HD"/>
</dbReference>
<dbReference type="InterPro" id="IPR020479">
    <property type="entry name" value="HD_metazoa"/>
</dbReference>
<dbReference type="InterPro" id="IPR017970">
    <property type="entry name" value="Homeobox_CS"/>
</dbReference>
<dbReference type="InterPro" id="IPR009057">
    <property type="entry name" value="Homeodomain-like_sf"/>
</dbReference>
<dbReference type="PANTHER" id="PTHR45970">
    <property type="entry name" value="AGAP004664-PA"/>
    <property type="match status" value="1"/>
</dbReference>
<dbReference type="PANTHER" id="PTHR45970:SF3">
    <property type="entry name" value="HOMEOBOX PROTEIN HOX-A9"/>
    <property type="match status" value="1"/>
</dbReference>
<dbReference type="Pfam" id="PF00046">
    <property type="entry name" value="Homeodomain"/>
    <property type="match status" value="1"/>
</dbReference>
<dbReference type="PRINTS" id="PR00024">
    <property type="entry name" value="HOMEOBOX"/>
</dbReference>
<dbReference type="SMART" id="SM00389">
    <property type="entry name" value="HOX"/>
    <property type="match status" value="1"/>
</dbReference>
<dbReference type="SUPFAM" id="SSF46689">
    <property type="entry name" value="Homeodomain-like"/>
    <property type="match status" value="1"/>
</dbReference>
<dbReference type="PROSITE" id="PS00027">
    <property type="entry name" value="HOMEOBOX_1"/>
    <property type="match status" value="1"/>
</dbReference>
<dbReference type="PROSITE" id="PS50071">
    <property type="entry name" value="HOMEOBOX_2"/>
    <property type="match status" value="1"/>
</dbReference>